<sequence length="96" mass="10836">MGNLISTCSFSSRVNSTAKITDSSIWYPQPDQHISIRTFRELNQAPTSSPTSTRTEMFLNGVLSRSTDDLQGEDSRQPMTLTPRQLTQDVSRRLLM</sequence>
<comment type="function">
    <text evidence="1">Pathogenicity determinant (By similarity). May act as a suppressor of RNA-mediated gene silencing, also known as post-transcriptional gene silencing (PTGS), a mechanism of plant viral defense that limits the accumulation of viral RNAs.</text>
</comment>
<comment type="subcellular location">
    <subcellularLocation>
        <location evidence="1">Host cell membrane</location>
        <topology evidence="1">Lipid-anchor</topology>
    </subcellularLocation>
    <text evidence="1">Localizes to the cell periphery.</text>
</comment>
<comment type="similarity">
    <text evidence="3">Belongs to the geminiviridae protein AC4/C4 family.</text>
</comment>
<proteinExistence type="inferred from homology"/>
<dbReference type="EMBL" id="L27708">
    <property type="protein sequence ID" value="AAA47956.1"/>
    <property type="molecule type" value="Genomic_DNA"/>
</dbReference>
<dbReference type="Proteomes" id="UP000008266">
    <property type="component" value="Genome"/>
</dbReference>
<dbReference type="GO" id="GO:0020002">
    <property type="term" value="C:host cell plasma membrane"/>
    <property type="evidence" value="ECO:0007669"/>
    <property type="project" value="UniProtKB-SubCell"/>
</dbReference>
<dbReference type="GO" id="GO:0016020">
    <property type="term" value="C:membrane"/>
    <property type="evidence" value="ECO:0007669"/>
    <property type="project" value="UniProtKB-KW"/>
</dbReference>
<dbReference type="GO" id="GO:0052170">
    <property type="term" value="P:symbiont-mediated suppression of host innate immune response"/>
    <property type="evidence" value="ECO:0007669"/>
    <property type="project" value="UniProtKB-KW"/>
</dbReference>
<dbReference type="InterPro" id="IPR002488">
    <property type="entry name" value="Gemini_C4"/>
</dbReference>
<dbReference type="Pfam" id="PF01492">
    <property type="entry name" value="Gemini_C4"/>
    <property type="match status" value="1"/>
</dbReference>
<accession>Q67621</accession>
<name>AC4_TYCS2</name>
<feature type="initiator methionine" description="Removed" evidence="1">
    <location>
        <position position="1"/>
    </location>
</feature>
<feature type="chain" id="PRO_0000323695" description="Protein C4">
    <location>
        <begin position="2"/>
        <end position="96"/>
    </location>
</feature>
<feature type="region of interest" description="Disordered" evidence="2">
    <location>
        <begin position="66"/>
        <end position="96"/>
    </location>
</feature>
<feature type="compositionally biased region" description="Polar residues" evidence="2">
    <location>
        <begin position="77"/>
        <end position="89"/>
    </location>
</feature>
<feature type="lipid moiety-binding region" description="N-myristoyl glycine; by host" evidence="1">
    <location>
        <position position="2"/>
    </location>
</feature>
<organismHost>
    <name type="scientific">Solanum lycopersicum</name>
    <name type="common">Tomato</name>
    <name type="synonym">Lycopersicon esculentum</name>
    <dbReference type="NCBI Taxonomy" id="4081"/>
</organismHost>
<organism>
    <name type="scientific">Tomato yellow leaf curl Sardinia virus (isolate Spain-2)</name>
    <name type="common">TYLCSV</name>
    <dbReference type="NCBI Taxonomy" id="221538"/>
    <lineage>
        <taxon>Viruses</taxon>
        <taxon>Monodnaviria</taxon>
        <taxon>Shotokuvirae</taxon>
        <taxon>Cressdnaviricota</taxon>
        <taxon>Repensiviricetes</taxon>
        <taxon>Geplafuvirales</taxon>
        <taxon>Geminiviridae</taxon>
        <taxon>Begomovirus</taxon>
        <taxon>Tomato yellow leaf curl Sardinia virus</taxon>
    </lineage>
</organism>
<reference key="1">
    <citation type="submission" date="1994-01" db="EMBL/GenBank/DDBJ databases">
        <title>Characterization of a tomato yellow leaf curl virus isolated from southeast Spain (almeria).</title>
        <authorList>
            <person name="Reina J."/>
            <person name="Cuadrado-Gomez I.M."/>
            <person name="Jimenez J."/>
            <person name="Bejarano E.R."/>
        </authorList>
    </citation>
    <scope>NUCLEOTIDE SEQUENCE [GENOMIC DNA]</scope>
</reference>
<gene>
    <name type="ORF">C4</name>
    <name type="ORF">L4</name>
</gene>
<keyword id="KW-1032">Host cell membrane</keyword>
<keyword id="KW-1043">Host membrane</keyword>
<keyword id="KW-0945">Host-virus interaction</keyword>
<keyword id="KW-1090">Inhibition of host innate immune response by virus</keyword>
<keyword id="KW-0449">Lipoprotein</keyword>
<keyword id="KW-0472">Membrane</keyword>
<keyword id="KW-0519">Myristate</keyword>
<keyword id="KW-0941">Suppressor of RNA silencing</keyword>
<keyword id="KW-0899">Viral immunoevasion</keyword>
<evidence type="ECO:0000250" key="1"/>
<evidence type="ECO:0000256" key="2">
    <source>
        <dbReference type="SAM" id="MobiDB-lite"/>
    </source>
</evidence>
<evidence type="ECO:0000305" key="3"/>
<protein>
    <recommendedName>
        <fullName>Protein C4</fullName>
    </recommendedName>
    <alternativeName>
        <fullName>10.9 kDa protein</fullName>
    </alternativeName>
    <alternativeName>
        <fullName>Protein L4</fullName>
    </alternativeName>
</protein>